<accession>C4LAG9</accession>
<name>ARGR_TOLAT</name>
<comment type="function">
    <text evidence="1">Regulates arginine biosynthesis genes.</text>
</comment>
<comment type="pathway">
    <text>Amino-acid biosynthesis; L-arginine biosynthesis [regulation].</text>
</comment>
<comment type="subcellular location">
    <subcellularLocation>
        <location evidence="1">Cytoplasm</location>
    </subcellularLocation>
</comment>
<comment type="similarity">
    <text evidence="1">Belongs to the ArgR family.</text>
</comment>
<gene>
    <name evidence="1" type="primary">argR</name>
    <name type="ordered locus">Tola_2550</name>
</gene>
<evidence type="ECO:0000255" key="1">
    <source>
        <dbReference type="HAMAP-Rule" id="MF_00173"/>
    </source>
</evidence>
<dbReference type="EMBL" id="CP001616">
    <property type="protein sequence ID" value="ACQ94144.1"/>
    <property type="molecule type" value="Genomic_DNA"/>
</dbReference>
<dbReference type="RefSeq" id="WP_015879593.1">
    <property type="nucleotide sequence ID" value="NC_012691.1"/>
</dbReference>
<dbReference type="SMR" id="C4LAG9"/>
<dbReference type="STRING" id="595494.Tola_2550"/>
<dbReference type="KEGG" id="tau:Tola_2550"/>
<dbReference type="eggNOG" id="COG1438">
    <property type="taxonomic scope" value="Bacteria"/>
</dbReference>
<dbReference type="HOGENOM" id="CLU_097103_2_0_6"/>
<dbReference type="OrthoDB" id="7060358at2"/>
<dbReference type="UniPathway" id="UPA00068"/>
<dbReference type="Proteomes" id="UP000009073">
    <property type="component" value="Chromosome"/>
</dbReference>
<dbReference type="GO" id="GO:0005737">
    <property type="term" value="C:cytoplasm"/>
    <property type="evidence" value="ECO:0007669"/>
    <property type="project" value="UniProtKB-SubCell"/>
</dbReference>
<dbReference type="GO" id="GO:0034618">
    <property type="term" value="F:arginine binding"/>
    <property type="evidence" value="ECO:0007669"/>
    <property type="project" value="InterPro"/>
</dbReference>
<dbReference type="GO" id="GO:0003677">
    <property type="term" value="F:DNA binding"/>
    <property type="evidence" value="ECO:0007669"/>
    <property type="project" value="UniProtKB-KW"/>
</dbReference>
<dbReference type="GO" id="GO:0003700">
    <property type="term" value="F:DNA-binding transcription factor activity"/>
    <property type="evidence" value="ECO:0007669"/>
    <property type="project" value="UniProtKB-UniRule"/>
</dbReference>
<dbReference type="GO" id="GO:0006526">
    <property type="term" value="P:L-arginine biosynthetic process"/>
    <property type="evidence" value="ECO:0007669"/>
    <property type="project" value="UniProtKB-UniPathway"/>
</dbReference>
<dbReference type="GO" id="GO:0051259">
    <property type="term" value="P:protein complex oligomerization"/>
    <property type="evidence" value="ECO:0007669"/>
    <property type="project" value="InterPro"/>
</dbReference>
<dbReference type="GO" id="GO:1900079">
    <property type="term" value="P:regulation of arginine biosynthetic process"/>
    <property type="evidence" value="ECO:0007669"/>
    <property type="project" value="UniProtKB-UniRule"/>
</dbReference>
<dbReference type="Gene3D" id="3.30.1360.40">
    <property type="match status" value="1"/>
</dbReference>
<dbReference type="Gene3D" id="1.10.10.10">
    <property type="entry name" value="Winged helix-like DNA-binding domain superfamily/Winged helix DNA-binding domain"/>
    <property type="match status" value="1"/>
</dbReference>
<dbReference type="HAMAP" id="MF_00173">
    <property type="entry name" value="Arg_repressor"/>
    <property type="match status" value="1"/>
</dbReference>
<dbReference type="InterPro" id="IPR001669">
    <property type="entry name" value="Arg_repress"/>
</dbReference>
<dbReference type="InterPro" id="IPR020899">
    <property type="entry name" value="Arg_repress_C"/>
</dbReference>
<dbReference type="InterPro" id="IPR036251">
    <property type="entry name" value="Arg_repress_C_sf"/>
</dbReference>
<dbReference type="InterPro" id="IPR020900">
    <property type="entry name" value="Arg_repress_DNA-bd"/>
</dbReference>
<dbReference type="InterPro" id="IPR036388">
    <property type="entry name" value="WH-like_DNA-bd_sf"/>
</dbReference>
<dbReference type="InterPro" id="IPR036390">
    <property type="entry name" value="WH_DNA-bd_sf"/>
</dbReference>
<dbReference type="NCBIfam" id="TIGR01529">
    <property type="entry name" value="argR_whole"/>
    <property type="match status" value="1"/>
</dbReference>
<dbReference type="NCBIfam" id="NF003457">
    <property type="entry name" value="PRK05066.1"/>
    <property type="match status" value="1"/>
</dbReference>
<dbReference type="PANTHER" id="PTHR34471">
    <property type="entry name" value="ARGININE REPRESSOR"/>
    <property type="match status" value="1"/>
</dbReference>
<dbReference type="PANTHER" id="PTHR34471:SF1">
    <property type="entry name" value="ARGININE REPRESSOR"/>
    <property type="match status" value="1"/>
</dbReference>
<dbReference type="Pfam" id="PF01316">
    <property type="entry name" value="Arg_repressor"/>
    <property type="match status" value="1"/>
</dbReference>
<dbReference type="Pfam" id="PF02863">
    <property type="entry name" value="Arg_repressor_C"/>
    <property type="match status" value="1"/>
</dbReference>
<dbReference type="PRINTS" id="PR01467">
    <property type="entry name" value="ARGREPRESSOR"/>
</dbReference>
<dbReference type="SUPFAM" id="SSF55252">
    <property type="entry name" value="C-terminal domain of arginine repressor"/>
    <property type="match status" value="1"/>
</dbReference>
<dbReference type="SUPFAM" id="SSF46785">
    <property type="entry name" value="Winged helix' DNA-binding domain"/>
    <property type="match status" value="1"/>
</dbReference>
<protein>
    <recommendedName>
        <fullName evidence="1">Arginine repressor</fullName>
    </recommendedName>
</protein>
<reference key="1">
    <citation type="submission" date="2009-05" db="EMBL/GenBank/DDBJ databases">
        <title>Complete sequence of Tolumonas auensis DSM 9187.</title>
        <authorList>
            <consortium name="US DOE Joint Genome Institute"/>
            <person name="Lucas S."/>
            <person name="Copeland A."/>
            <person name="Lapidus A."/>
            <person name="Glavina del Rio T."/>
            <person name="Tice H."/>
            <person name="Bruce D."/>
            <person name="Goodwin L."/>
            <person name="Pitluck S."/>
            <person name="Chertkov O."/>
            <person name="Brettin T."/>
            <person name="Detter J.C."/>
            <person name="Han C."/>
            <person name="Larimer F."/>
            <person name="Land M."/>
            <person name="Hauser L."/>
            <person name="Kyrpides N."/>
            <person name="Mikhailova N."/>
            <person name="Spring S."/>
            <person name="Beller H."/>
        </authorList>
    </citation>
    <scope>NUCLEOTIDE SEQUENCE [LARGE SCALE GENOMIC DNA]</scope>
    <source>
        <strain>DSM 9187 / NBRC 110442 / TA 4</strain>
    </source>
</reference>
<keyword id="KW-0028">Amino-acid biosynthesis</keyword>
<keyword id="KW-0055">Arginine biosynthesis</keyword>
<keyword id="KW-0963">Cytoplasm</keyword>
<keyword id="KW-0238">DNA-binding</keyword>
<keyword id="KW-1185">Reference proteome</keyword>
<keyword id="KW-0678">Repressor</keyword>
<keyword id="KW-0804">Transcription</keyword>
<keyword id="KW-0805">Transcription regulation</keyword>
<organism>
    <name type="scientific">Tolumonas auensis (strain DSM 9187 / NBRC 110442 / TA 4)</name>
    <dbReference type="NCBI Taxonomy" id="595494"/>
    <lineage>
        <taxon>Bacteria</taxon>
        <taxon>Pseudomonadati</taxon>
        <taxon>Pseudomonadota</taxon>
        <taxon>Gammaproteobacteria</taxon>
        <taxon>Aeromonadales</taxon>
        <taxon>Aeromonadaceae</taxon>
        <taxon>Tolumonas</taxon>
    </lineage>
</organism>
<sequence length="156" mass="17111">MKPGEKQEQLVKAFKALLREERFGSQAEIVTALNEIGFENINQSKVSRMLSRFGAVRTRNAKMEMVYCLPVELGIPTINSPLKNLVLDVDHNGVILVIHTTPGAAQLIARMLDSLGKAEGILGTIAGDDTIFITPTAESDIDELYDSVLELFEHTG</sequence>
<feature type="chain" id="PRO_1000203721" description="Arginine repressor">
    <location>
        <begin position="1"/>
        <end position="156"/>
    </location>
</feature>
<proteinExistence type="inferred from homology"/>